<sequence length="193" mass="21680">MAEIRRKLVIVGDGACGKTCLLIVFSKGTFPEVYVPTVFENYVADVEVDGKHVELALWDTAGQEDYDRLRPLSYPDSHVILICFAVDSPDSLDNVQEKWISEVLHFCQGLPIILVGCKKDLRHDPKTIEELNKTSQKPVTPEQGEEVRKKIGAYKYLECSARTNEGVREVFEAATRAALLTKTHKSKKKCSIL</sequence>
<proteinExistence type="inferred from homology"/>
<protein>
    <recommendedName>
        <fullName>GTP-binding protein rhoA</fullName>
    </recommendedName>
    <alternativeName>
        <fullName>Rho1 protein homolog</fullName>
    </alternativeName>
</protein>
<name>RHOA_EMENI</name>
<evidence type="ECO:0000250" key="1"/>
<evidence type="ECO:0000269" key="2">
    <source>
    </source>
</evidence>
<evidence type="ECO:0000305" key="3"/>
<gene>
    <name type="primary">rhoA</name>
    <name type="ORF">AN5740</name>
</gene>
<accession>Q9C3Y4</accession>
<accession>C8VFK0</accession>
<accession>Q5B140</accession>
<comment type="function">
    <text evidence="2">Has a role in cell polarity, primary and secondary germ tube emergence and cell wall deposition.</text>
</comment>
<comment type="subcellular location">
    <subcellularLocation>
        <location evidence="3">Cell membrane</location>
        <topology evidence="3">Lipid-anchor</topology>
        <orientation evidence="3">Cytoplasmic side</orientation>
    </subcellularLocation>
</comment>
<comment type="similarity">
    <text evidence="3">Belongs to the small GTPase superfamily. Rho family.</text>
</comment>
<feature type="chain" id="PRO_0000198936" description="GTP-binding protein rhoA">
    <location>
        <begin position="1"/>
        <end position="190"/>
    </location>
</feature>
<feature type="propeptide" id="PRO_0000281266" description="Removed in mature form" evidence="1">
    <location>
        <begin position="191"/>
        <end position="193"/>
    </location>
</feature>
<feature type="short sequence motif" description="Effector region" evidence="1">
    <location>
        <begin position="34"/>
        <end position="42"/>
    </location>
</feature>
<feature type="binding site" evidence="1">
    <location>
        <begin position="12"/>
        <end position="19"/>
    </location>
    <ligand>
        <name>GTP</name>
        <dbReference type="ChEBI" id="CHEBI:37565"/>
    </ligand>
</feature>
<feature type="binding site" evidence="1">
    <location>
        <begin position="59"/>
        <end position="63"/>
    </location>
    <ligand>
        <name>GTP</name>
        <dbReference type="ChEBI" id="CHEBI:37565"/>
    </ligand>
</feature>
<feature type="binding site" evidence="1">
    <location>
        <begin position="117"/>
        <end position="120"/>
    </location>
    <ligand>
        <name>GTP</name>
        <dbReference type="ChEBI" id="CHEBI:37565"/>
    </ligand>
</feature>
<feature type="modified residue" description="Cysteine methyl ester" evidence="1">
    <location>
        <position position="190"/>
    </location>
</feature>
<feature type="lipid moiety-binding region" description="S-geranylgeranyl cysteine" evidence="1">
    <location>
        <position position="190"/>
    </location>
</feature>
<reference key="1">
    <citation type="journal article" date="2004" name="Fungal Genet. Biol.">
        <title>Aspergillus nidulans RhoA is involved in polar growth, branching, and cell wall synthesis.</title>
        <authorList>
            <person name="Guest G.M."/>
            <person name="Lin X."/>
            <person name="Momany M."/>
        </authorList>
    </citation>
    <scope>NUCLEOTIDE SEQUENCE [GENOMIC DNA]</scope>
    <scope>FUNCTION</scope>
</reference>
<reference key="2">
    <citation type="journal article" date="2005" name="Nature">
        <title>Sequencing of Aspergillus nidulans and comparative analysis with A. fumigatus and A. oryzae.</title>
        <authorList>
            <person name="Galagan J.E."/>
            <person name="Calvo S.E."/>
            <person name="Cuomo C."/>
            <person name="Ma L.-J."/>
            <person name="Wortman J.R."/>
            <person name="Batzoglou S."/>
            <person name="Lee S.-I."/>
            <person name="Bastuerkmen M."/>
            <person name="Spevak C.C."/>
            <person name="Clutterbuck J."/>
            <person name="Kapitonov V."/>
            <person name="Jurka J."/>
            <person name="Scazzocchio C."/>
            <person name="Farman M.L."/>
            <person name="Butler J."/>
            <person name="Purcell S."/>
            <person name="Harris S."/>
            <person name="Braus G.H."/>
            <person name="Draht O."/>
            <person name="Busch S."/>
            <person name="D'Enfert C."/>
            <person name="Bouchier C."/>
            <person name="Goldman G.H."/>
            <person name="Bell-Pedersen D."/>
            <person name="Griffiths-Jones S."/>
            <person name="Doonan J.H."/>
            <person name="Yu J."/>
            <person name="Vienken K."/>
            <person name="Pain A."/>
            <person name="Freitag M."/>
            <person name="Selker E.U."/>
            <person name="Archer D.B."/>
            <person name="Penalva M.A."/>
            <person name="Oakley B.R."/>
            <person name="Momany M."/>
            <person name="Tanaka T."/>
            <person name="Kumagai T."/>
            <person name="Asai K."/>
            <person name="Machida M."/>
            <person name="Nierman W.C."/>
            <person name="Denning D.W."/>
            <person name="Caddick M.X."/>
            <person name="Hynes M."/>
            <person name="Paoletti M."/>
            <person name="Fischer R."/>
            <person name="Miller B.L."/>
            <person name="Dyer P.S."/>
            <person name="Sachs M.S."/>
            <person name="Osmani S.A."/>
            <person name="Birren B.W."/>
        </authorList>
    </citation>
    <scope>NUCLEOTIDE SEQUENCE [LARGE SCALE GENOMIC DNA]</scope>
    <source>
        <strain>FGSC A4 / ATCC 38163 / CBS 112.46 / NRRL 194 / M139</strain>
    </source>
</reference>
<reference key="3">
    <citation type="journal article" date="2009" name="Fungal Genet. Biol.">
        <title>The 2008 update of the Aspergillus nidulans genome annotation: a community effort.</title>
        <authorList>
            <person name="Wortman J.R."/>
            <person name="Gilsenan J.M."/>
            <person name="Joardar V."/>
            <person name="Deegan J."/>
            <person name="Clutterbuck J."/>
            <person name="Andersen M.R."/>
            <person name="Archer D."/>
            <person name="Bencina M."/>
            <person name="Braus G."/>
            <person name="Coutinho P."/>
            <person name="von Dohren H."/>
            <person name="Doonan J."/>
            <person name="Driessen A.J."/>
            <person name="Durek P."/>
            <person name="Espeso E."/>
            <person name="Fekete E."/>
            <person name="Flipphi M."/>
            <person name="Estrada C.G."/>
            <person name="Geysens S."/>
            <person name="Goldman G."/>
            <person name="de Groot P.W."/>
            <person name="Hansen K."/>
            <person name="Harris S.D."/>
            <person name="Heinekamp T."/>
            <person name="Helmstaedt K."/>
            <person name="Henrissat B."/>
            <person name="Hofmann G."/>
            <person name="Homan T."/>
            <person name="Horio T."/>
            <person name="Horiuchi H."/>
            <person name="James S."/>
            <person name="Jones M."/>
            <person name="Karaffa L."/>
            <person name="Karanyi Z."/>
            <person name="Kato M."/>
            <person name="Keller N."/>
            <person name="Kelly D.E."/>
            <person name="Kiel J.A."/>
            <person name="Kim J.M."/>
            <person name="van der Klei I.J."/>
            <person name="Klis F.M."/>
            <person name="Kovalchuk A."/>
            <person name="Krasevec N."/>
            <person name="Kubicek C.P."/>
            <person name="Liu B."/>
            <person name="Maccabe A."/>
            <person name="Meyer V."/>
            <person name="Mirabito P."/>
            <person name="Miskei M."/>
            <person name="Mos M."/>
            <person name="Mullins J."/>
            <person name="Nelson D.R."/>
            <person name="Nielsen J."/>
            <person name="Oakley B.R."/>
            <person name="Osmani S.A."/>
            <person name="Pakula T."/>
            <person name="Paszewski A."/>
            <person name="Paulsen I."/>
            <person name="Pilsyk S."/>
            <person name="Pocsi I."/>
            <person name="Punt P.J."/>
            <person name="Ram A.F."/>
            <person name="Ren Q."/>
            <person name="Robellet X."/>
            <person name="Robson G."/>
            <person name="Seiboth B."/>
            <person name="van Solingen P."/>
            <person name="Specht T."/>
            <person name="Sun J."/>
            <person name="Taheri-Talesh N."/>
            <person name="Takeshita N."/>
            <person name="Ussery D."/>
            <person name="vanKuyk P.A."/>
            <person name="Visser H."/>
            <person name="van de Vondervoort P.J."/>
            <person name="de Vries R.P."/>
            <person name="Walton J."/>
            <person name="Xiang X."/>
            <person name="Xiong Y."/>
            <person name="Zeng A.P."/>
            <person name="Brandt B.W."/>
            <person name="Cornell M.J."/>
            <person name="van den Hondel C.A."/>
            <person name="Visser J."/>
            <person name="Oliver S.G."/>
            <person name="Turner G."/>
        </authorList>
    </citation>
    <scope>GENOME REANNOTATION</scope>
    <source>
        <strain>FGSC A4 / ATCC 38163 / CBS 112.46 / NRRL 194 / M139</strain>
    </source>
</reference>
<dbReference type="EMBL" id="AF338871">
    <property type="protein sequence ID" value="AAK08118.1"/>
    <property type="molecule type" value="Genomic_DNA"/>
</dbReference>
<dbReference type="EMBL" id="AACD01000098">
    <property type="protein sequence ID" value="EAA62833.1"/>
    <property type="molecule type" value="Genomic_DNA"/>
</dbReference>
<dbReference type="EMBL" id="BN001305">
    <property type="protein sequence ID" value="CBF81299.1"/>
    <property type="molecule type" value="Genomic_DNA"/>
</dbReference>
<dbReference type="RefSeq" id="XP_663344.1">
    <property type="nucleotide sequence ID" value="XM_658252.1"/>
</dbReference>
<dbReference type="SMR" id="Q9C3Y4"/>
<dbReference type="FunCoup" id="Q9C3Y4">
    <property type="interactions" value="706"/>
</dbReference>
<dbReference type="STRING" id="227321.Q9C3Y4"/>
<dbReference type="EnsemblFungi" id="CBF81299">
    <property type="protein sequence ID" value="CBF81299"/>
    <property type="gene ID" value="ANIA_05740"/>
</dbReference>
<dbReference type="KEGG" id="ani:ANIA_05740"/>
<dbReference type="VEuPathDB" id="FungiDB:AN5740"/>
<dbReference type="eggNOG" id="KOG0393">
    <property type="taxonomic scope" value="Eukaryota"/>
</dbReference>
<dbReference type="HOGENOM" id="CLU_041217_21_2_1"/>
<dbReference type="InParanoid" id="Q9C3Y4"/>
<dbReference type="OMA" id="EVNHYIP"/>
<dbReference type="OrthoDB" id="8830751at2759"/>
<dbReference type="Proteomes" id="UP000000560">
    <property type="component" value="Chromosome V"/>
</dbReference>
<dbReference type="GO" id="GO:0005829">
    <property type="term" value="C:cytosol"/>
    <property type="evidence" value="ECO:0000318"/>
    <property type="project" value="GO_Central"/>
</dbReference>
<dbReference type="GO" id="GO:0005886">
    <property type="term" value="C:plasma membrane"/>
    <property type="evidence" value="ECO:0000318"/>
    <property type="project" value="GO_Central"/>
</dbReference>
<dbReference type="GO" id="GO:0005525">
    <property type="term" value="F:GTP binding"/>
    <property type="evidence" value="ECO:0000318"/>
    <property type="project" value="GO_Central"/>
</dbReference>
<dbReference type="GO" id="GO:0003924">
    <property type="term" value="F:GTPase activity"/>
    <property type="evidence" value="ECO:0000318"/>
    <property type="project" value="GO_Central"/>
</dbReference>
<dbReference type="GO" id="GO:0019901">
    <property type="term" value="F:protein kinase binding"/>
    <property type="evidence" value="ECO:0000318"/>
    <property type="project" value="GO_Central"/>
</dbReference>
<dbReference type="GO" id="GO:0007015">
    <property type="term" value="P:actin filament organization"/>
    <property type="evidence" value="ECO:0000318"/>
    <property type="project" value="GO_Central"/>
</dbReference>
<dbReference type="GO" id="GO:0031505">
    <property type="term" value="P:fungal-type cell wall organization"/>
    <property type="evidence" value="ECO:0000315"/>
    <property type="project" value="AspGD"/>
</dbReference>
<dbReference type="GO" id="GO:0030448">
    <property type="term" value="P:hyphal growth"/>
    <property type="evidence" value="ECO:0000315"/>
    <property type="project" value="AspGD"/>
</dbReference>
<dbReference type="GO" id="GO:0032956">
    <property type="term" value="P:regulation of actin cytoskeleton organization"/>
    <property type="evidence" value="ECO:0000318"/>
    <property type="project" value="GO_Central"/>
</dbReference>
<dbReference type="GO" id="GO:0007165">
    <property type="term" value="P:signal transduction"/>
    <property type="evidence" value="ECO:0000318"/>
    <property type="project" value="GO_Central"/>
</dbReference>
<dbReference type="GO" id="GO:0007264">
    <property type="term" value="P:small GTPase-mediated signal transduction"/>
    <property type="evidence" value="ECO:0007669"/>
    <property type="project" value="InterPro"/>
</dbReference>
<dbReference type="CDD" id="cd01870">
    <property type="entry name" value="RhoA_like"/>
    <property type="match status" value="1"/>
</dbReference>
<dbReference type="FunFam" id="3.40.50.300:FF:000329">
    <property type="entry name" value="GTP-binding protein rhoA"/>
    <property type="match status" value="1"/>
</dbReference>
<dbReference type="Gene3D" id="3.40.50.300">
    <property type="entry name" value="P-loop containing nucleotide triphosphate hydrolases"/>
    <property type="match status" value="1"/>
</dbReference>
<dbReference type="InterPro" id="IPR027417">
    <property type="entry name" value="P-loop_NTPase"/>
</dbReference>
<dbReference type="InterPro" id="IPR005225">
    <property type="entry name" value="Small_GTP-bd"/>
</dbReference>
<dbReference type="InterPro" id="IPR001806">
    <property type="entry name" value="Small_GTPase"/>
</dbReference>
<dbReference type="InterPro" id="IPR003578">
    <property type="entry name" value="Small_GTPase_Rho"/>
</dbReference>
<dbReference type="NCBIfam" id="TIGR00231">
    <property type="entry name" value="small_GTP"/>
    <property type="match status" value="1"/>
</dbReference>
<dbReference type="PANTHER" id="PTHR24072">
    <property type="entry name" value="RHO FAMILY GTPASE"/>
    <property type="match status" value="1"/>
</dbReference>
<dbReference type="Pfam" id="PF00071">
    <property type="entry name" value="Ras"/>
    <property type="match status" value="1"/>
</dbReference>
<dbReference type="PRINTS" id="PR00449">
    <property type="entry name" value="RASTRNSFRMNG"/>
</dbReference>
<dbReference type="SMART" id="SM00175">
    <property type="entry name" value="RAB"/>
    <property type="match status" value="1"/>
</dbReference>
<dbReference type="SMART" id="SM00173">
    <property type="entry name" value="RAS"/>
    <property type="match status" value="1"/>
</dbReference>
<dbReference type="SMART" id="SM00174">
    <property type="entry name" value="RHO"/>
    <property type="match status" value="1"/>
</dbReference>
<dbReference type="SUPFAM" id="SSF52540">
    <property type="entry name" value="P-loop containing nucleoside triphosphate hydrolases"/>
    <property type="match status" value="1"/>
</dbReference>
<dbReference type="PROSITE" id="PS51420">
    <property type="entry name" value="RHO"/>
    <property type="match status" value="1"/>
</dbReference>
<keyword id="KW-1003">Cell membrane</keyword>
<keyword id="KW-0342">GTP-binding</keyword>
<keyword id="KW-0449">Lipoprotein</keyword>
<keyword id="KW-0472">Membrane</keyword>
<keyword id="KW-0488">Methylation</keyword>
<keyword id="KW-0547">Nucleotide-binding</keyword>
<keyword id="KW-0636">Prenylation</keyword>
<keyword id="KW-1185">Reference proteome</keyword>
<organism>
    <name type="scientific">Emericella nidulans (strain FGSC A4 / ATCC 38163 / CBS 112.46 / NRRL 194 / M139)</name>
    <name type="common">Aspergillus nidulans</name>
    <dbReference type="NCBI Taxonomy" id="227321"/>
    <lineage>
        <taxon>Eukaryota</taxon>
        <taxon>Fungi</taxon>
        <taxon>Dikarya</taxon>
        <taxon>Ascomycota</taxon>
        <taxon>Pezizomycotina</taxon>
        <taxon>Eurotiomycetes</taxon>
        <taxon>Eurotiomycetidae</taxon>
        <taxon>Eurotiales</taxon>
        <taxon>Aspergillaceae</taxon>
        <taxon>Aspergillus</taxon>
        <taxon>Aspergillus subgen. Nidulantes</taxon>
    </lineage>
</organism>